<name>GCR2_YEAST</name>
<dbReference type="EMBL" id="D10104">
    <property type="protein sequence ID" value="BAA00985.1"/>
    <property type="molecule type" value="Genomic_DNA"/>
</dbReference>
<dbReference type="EMBL" id="X78898">
    <property type="protein sequence ID" value="CAA55509.1"/>
    <property type="molecule type" value="Genomic_DNA"/>
</dbReference>
<dbReference type="EMBL" id="Z71475">
    <property type="protein sequence ID" value="CAA96097.1"/>
    <property type="molecule type" value="Genomic_DNA"/>
</dbReference>
<dbReference type="EMBL" id="BK006947">
    <property type="protein sequence ID" value="DAA10355.1"/>
    <property type="molecule type" value="Genomic_DNA"/>
</dbReference>
<dbReference type="PIR" id="S31300">
    <property type="entry name" value="S31300"/>
</dbReference>
<dbReference type="RefSeq" id="NP_014200.1">
    <property type="nucleotide sequence ID" value="NM_001183037.1"/>
</dbReference>
<dbReference type="SMR" id="Q01722"/>
<dbReference type="BioGRID" id="35635">
    <property type="interactions" value="379"/>
</dbReference>
<dbReference type="ComplexPortal" id="CPX-1229">
    <property type="entry name" value="RAP1-GCR1-GCR2 transcription activation complex"/>
</dbReference>
<dbReference type="DIP" id="DIP-732N"/>
<dbReference type="FunCoup" id="Q01722">
    <property type="interactions" value="1348"/>
</dbReference>
<dbReference type="IntAct" id="Q01722">
    <property type="interactions" value="17"/>
</dbReference>
<dbReference type="MINT" id="Q01722"/>
<dbReference type="STRING" id="4932.YNL199C"/>
<dbReference type="iPTMnet" id="Q01722"/>
<dbReference type="PaxDb" id="4932-YNL199C"/>
<dbReference type="PeptideAtlas" id="Q01722"/>
<dbReference type="EnsemblFungi" id="YNL199C_mRNA">
    <property type="protein sequence ID" value="YNL199C"/>
    <property type="gene ID" value="YNL199C"/>
</dbReference>
<dbReference type="GeneID" id="855522"/>
<dbReference type="KEGG" id="sce:YNL199C"/>
<dbReference type="AGR" id="SGD:S000005143"/>
<dbReference type="SGD" id="S000005143">
    <property type="gene designation" value="GCR2"/>
</dbReference>
<dbReference type="VEuPathDB" id="FungiDB:YNL199C"/>
<dbReference type="eggNOG" id="ENOG502QU4I">
    <property type="taxonomic scope" value="Eukaryota"/>
</dbReference>
<dbReference type="HOGENOM" id="CLU_023702_0_0_1"/>
<dbReference type="InParanoid" id="Q01722"/>
<dbReference type="OMA" id="AGIMHHQ"/>
<dbReference type="OrthoDB" id="4070640at2759"/>
<dbReference type="BioCyc" id="YEAST:G3O-33208-MONOMER"/>
<dbReference type="BioGRID-ORCS" id="855522">
    <property type="hits" value="8 hits in 10 CRISPR screens"/>
</dbReference>
<dbReference type="PRO" id="PR:Q01722"/>
<dbReference type="Proteomes" id="UP000002311">
    <property type="component" value="Chromosome XIV"/>
</dbReference>
<dbReference type="RNAct" id="Q01722">
    <property type="molecule type" value="protein"/>
</dbReference>
<dbReference type="GO" id="GO:0005635">
    <property type="term" value="C:nuclear envelope"/>
    <property type="evidence" value="ECO:0000314"/>
    <property type="project" value="SGD"/>
</dbReference>
<dbReference type="GO" id="GO:0005634">
    <property type="term" value="C:nucleus"/>
    <property type="evidence" value="ECO:0000314"/>
    <property type="project" value="SGD"/>
</dbReference>
<dbReference type="GO" id="GO:0005667">
    <property type="term" value="C:transcription regulator complex"/>
    <property type="evidence" value="ECO:0000303"/>
    <property type="project" value="ComplexPortal"/>
</dbReference>
<dbReference type="GO" id="GO:0061629">
    <property type="term" value="F:RNA polymerase II-specific DNA-binding transcription factor binding"/>
    <property type="evidence" value="ECO:0000314"/>
    <property type="project" value="SGD"/>
</dbReference>
<dbReference type="GO" id="GO:0003712">
    <property type="term" value="F:transcription coregulator activity"/>
    <property type="evidence" value="ECO:0000316"/>
    <property type="project" value="SGD"/>
</dbReference>
<dbReference type="GO" id="GO:0000122">
    <property type="term" value="P:negative regulation of transcription by RNA polymerase II"/>
    <property type="evidence" value="ECO:0000314"/>
    <property type="project" value="SGD"/>
</dbReference>
<dbReference type="GO" id="GO:0060196">
    <property type="term" value="P:positive regulation of antisense RNA transcription"/>
    <property type="evidence" value="ECO:0000314"/>
    <property type="project" value="SGD"/>
</dbReference>
<dbReference type="GO" id="GO:0060963">
    <property type="term" value="P:positive regulation of ribosomal protein gene transcription by RNA polymerase II"/>
    <property type="evidence" value="ECO:0000315"/>
    <property type="project" value="SGD"/>
</dbReference>
<dbReference type="GO" id="GO:0045944">
    <property type="term" value="P:positive regulation of transcription by RNA polymerase II"/>
    <property type="evidence" value="ECO:0000315"/>
    <property type="project" value="SGD"/>
</dbReference>
<dbReference type="GO" id="GO:0006110">
    <property type="term" value="P:regulation of glycolytic process"/>
    <property type="evidence" value="ECO:0000315"/>
    <property type="project" value="SGD"/>
</dbReference>
<sequence length="534" mass="58062">MHHQTKLDVFIIRAYNLLSNESVISGASLQSVTNSPQTTTNTPSGMVNGAVGTGIANPTGLMGSDSTPNIDEIITSTGSNALTKTNSDSANGTPNGNSSSTSAISNASNPATTGNNASSSATSNGIYTQAQYSQLFAKISKLYNATLSSGSIDDRSTSPKSAIELYQRFQQMIKELELSFDASPYAKYFRRLDGRLWQIKTDSELENDELWRLVSMSIFTVFDPQTGQILTQGRRKGNSLNTSTKGSPSDLQGINNGNNNGNNGNIGNGSNIKNYGNKNMPNNRTKKRGTRVAKNAKNGKNNKNSNKERNGITDTSAFSNTTISNPGTNMLFDPSLSQQLQKRLQTLSQDVNSRSLTGYYTQPTSPGSGGFEFGLSHADLNPNASSNTMGYNTMSNNGSHSWKRRSLGSLDVNTLDDEAVEELLQLTNTSKRQRPMTTAAEGALINDGPDTNLNANNTQMKVDLNPSNSMGPIDTEAVIRPLKEAYDAIISEKGQRIVQLERELELQRQETQWLRKMLIEDMGCVRSMLRDLQR</sequence>
<proteinExistence type="evidence at protein level"/>
<gene>
    <name type="primary">GCR2</name>
    <name type="ordered locus">YNL199C</name>
    <name type="ORF">N1374</name>
</gene>
<keyword id="KW-0010">Activator</keyword>
<keyword id="KW-0539">Nucleus</keyword>
<keyword id="KW-0597">Phosphoprotein</keyword>
<keyword id="KW-1185">Reference proteome</keyword>
<keyword id="KW-0804">Transcription</keyword>
<keyword id="KW-0805">Transcription regulation</keyword>
<reference key="1">
    <citation type="journal article" date="1992" name="Mol. Cell. Biol.">
        <title>Role of GCR2 in transcriptional activation of yeast glycolytic genes.</title>
        <authorList>
            <person name="Uemura H."/>
            <person name="Jigami Y."/>
        </authorList>
    </citation>
    <scope>NUCLEOTIDE SEQUENCE [GENOMIC DNA]</scope>
    <scope>FUNCTION</scope>
    <scope>INTERACTION WITH GCR1</scope>
</reference>
<reference key="2">
    <citation type="journal article" date="1994" name="Yeast">
        <title>A 21.7 kb DNA segment on the left arm of yeast chromosome XIV carries WHI3, GCR2, SPX18, SPX19, an homologue to the heat shock gene SSB1 and 8 new open reading frames of unknown function.</title>
        <authorList>
            <person name="Jonniaux J.-L."/>
            <person name="Coster F."/>
            <person name="Purnelle B."/>
            <person name="Goffeau A."/>
        </authorList>
    </citation>
    <scope>NUCLEOTIDE SEQUENCE [GENOMIC DNA]</scope>
    <source>
        <strain>ATCC 96604 / S288c / FY1679</strain>
    </source>
</reference>
<reference key="3">
    <citation type="journal article" date="1997" name="Nature">
        <title>The nucleotide sequence of Saccharomyces cerevisiae chromosome XIV and its evolutionary implications.</title>
        <authorList>
            <person name="Philippsen P."/>
            <person name="Kleine K."/>
            <person name="Poehlmann R."/>
            <person name="Duesterhoeft A."/>
            <person name="Hamberg K."/>
            <person name="Hegemann J.H."/>
            <person name="Obermaier B."/>
            <person name="Urrestarazu L.A."/>
            <person name="Aert R."/>
            <person name="Albermann K."/>
            <person name="Altmann R."/>
            <person name="Andre B."/>
            <person name="Baladron V."/>
            <person name="Ballesta J.P.G."/>
            <person name="Becam A.-M."/>
            <person name="Beinhauer J.D."/>
            <person name="Boskovic J."/>
            <person name="Buitrago M.J."/>
            <person name="Bussereau F."/>
            <person name="Coster F."/>
            <person name="Crouzet M."/>
            <person name="D'Angelo M."/>
            <person name="Dal Pero F."/>
            <person name="De Antoni A."/>
            <person name="del Rey F."/>
            <person name="Doignon F."/>
            <person name="Domdey H."/>
            <person name="Dubois E."/>
            <person name="Fiedler T.A."/>
            <person name="Fleig U."/>
            <person name="Floeth M."/>
            <person name="Fritz C."/>
            <person name="Gaillardin C."/>
            <person name="Garcia-Cantalejo J.M."/>
            <person name="Glansdorff N."/>
            <person name="Goffeau A."/>
            <person name="Gueldener U."/>
            <person name="Herbert C.J."/>
            <person name="Heumann K."/>
            <person name="Heuss-Neitzel D."/>
            <person name="Hilbert H."/>
            <person name="Hinni K."/>
            <person name="Iraqui Houssaini I."/>
            <person name="Jacquet M."/>
            <person name="Jimenez A."/>
            <person name="Jonniaux J.-L."/>
            <person name="Karpfinger-Hartl L."/>
            <person name="Lanfranchi G."/>
            <person name="Lepingle A."/>
            <person name="Levesque H."/>
            <person name="Lyck R."/>
            <person name="Maftahi M."/>
            <person name="Mallet L."/>
            <person name="Maurer C.T.C."/>
            <person name="Messenguy F."/>
            <person name="Mewes H.-W."/>
            <person name="Moestl D."/>
            <person name="Nasr F."/>
            <person name="Nicaud J.-M."/>
            <person name="Niedenthal R.K."/>
            <person name="Pandolfo D."/>
            <person name="Pierard A."/>
            <person name="Piravandi E."/>
            <person name="Planta R.J."/>
            <person name="Pohl T.M."/>
            <person name="Purnelle B."/>
            <person name="Rebischung C."/>
            <person name="Remacha M.A."/>
            <person name="Revuelta J.L."/>
            <person name="Rinke M."/>
            <person name="Saiz J.E."/>
            <person name="Sartorello F."/>
            <person name="Scherens B."/>
            <person name="Sen-Gupta M."/>
            <person name="Soler-Mira A."/>
            <person name="Urbanus J.H.M."/>
            <person name="Valle G."/>
            <person name="Van Dyck L."/>
            <person name="Verhasselt P."/>
            <person name="Vierendeels F."/>
            <person name="Vissers S."/>
            <person name="Voet M."/>
            <person name="Volckaert G."/>
            <person name="Wach A."/>
            <person name="Wambutt R."/>
            <person name="Wedler H."/>
            <person name="Zollner A."/>
            <person name="Hani J."/>
        </authorList>
    </citation>
    <scope>NUCLEOTIDE SEQUENCE [LARGE SCALE GENOMIC DNA]</scope>
    <source>
        <strain>ATCC 204508 / S288c</strain>
    </source>
</reference>
<reference key="4">
    <citation type="journal article" date="2014" name="G3 (Bethesda)">
        <title>The reference genome sequence of Saccharomyces cerevisiae: Then and now.</title>
        <authorList>
            <person name="Engel S.R."/>
            <person name="Dietrich F.S."/>
            <person name="Fisk D.G."/>
            <person name="Binkley G."/>
            <person name="Balakrishnan R."/>
            <person name="Costanzo M.C."/>
            <person name="Dwight S.S."/>
            <person name="Hitz B.C."/>
            <person name="Karra K."/>
            <person name="Nash R.S."/>
            <person name="Weng S."/>
            <person name="Wong E.D."/>
            <person name="Lloyd P."/>
            <person name="Skrzypek M.S."/>
            <person name="Miyasato S.R."/>
            <person name="Simison M."/>
            <person name="Cherry J.M."/>
        </authorList>
    </citation>
    <scope>GENOME REANNOTATION</scope>
    <source>
        <strain>ATCC 204508 / S288c</strain>
    </source>
</reference>
<reference key="5">
    <citation type="journal article" date="1997" name="Genetics">
        <title>Specialized Rap1p/Gcr1p transcriptional activation through Gcr1p DNA contacts requires Gcr2p, as does hyperphosphorylation of Gcr1p.</title>
        <authorList>
            <person name="Zeng X."/>
            <person name="Deminoff S.J."/>
            <person name="Santangelo G.M."/>
        </authorList>
    </citation>
    <scope>FUNCTION</scope>
</reference>
<reference key="6">
    <citation type="journal article" date="2001" name="Genetics">
        <title>Rap1p requires Gcr1p and Gcr2p homodimers to activate ribosomal protein and glycolytic genes, respectively.</title>
        <authorList>
            <person name="Deminoff S.J."/>
            <person name="Santangelo G.M."/>
        </authorList>
    </citation>
    <scope>FUNCTION</scope>
    <scope>HOMODIMERIZATION</scope>
</reference>
<reference key="7">
    <citation type="journal article" date="2008" name="Mol. Cell. Proteomics">
        <title>A multidimensional chromatography technology for in-depth phosphoproteome analysis.</title>
        <authorList>
            <person name="Albuquerque C.P."/>
            <person name="Smolka M.B."/>
            <person name="Payne S.H."/>
            <person name="Bafna V."/>
            <person name="Eng J."/>
            <person name="Zhou H."/>
        </authorList>
    </citation>
    <scope>PHOSPHORYLATION [LARGE SCALE ANALYSIS] AT SER-151</scope>
    <scope>IDENTIFICATION BY MASS SPECTROMETRY [LARGE SCALE ANALYSIS]</scope>
</reference>
<reference key="8">
    <citation type="journal article" date="2009" name="Science">
        <title>Global analysis of Cdk1 substrate phosphorylation sites provides insights into evolution.</title>
        <authorList>
            <person name="Holt L.J."/>
            <person name="Tuch B.B."/>
            <person name="Villen J."/>
            <person name="Johnson A.D."/>
            <person name="Gygi S.P."/>
            <person name="Morgan D.O."/>
        </authorList>
    </citation>
    <scope>PHOSPHORYLATION [LARGE SCALE ANALYSIS] AT SER-406 AND SER-409</scope>
    <scope>IDENTIFICATION BY MASS SPECTROMETRY [LARGE SCALE ANALYSIS]</scope>
</reference>
<organism>
    <name type="scientific">Saccharomyces cerevisiae (strain ATCC 204508 / S288c)</name>
    <name type="common">Baker's yeast</name>
    <dbReference type="NCBI Taxonomy" id="559292"/>
    <lineage>
        <taxon>Eukaryota</taxon>
        <taxon>Fungi</taxon>
        <taxon>Dikarya</taxon>
        <taxon>Ascomycota</taxon>
        <taxon>Saccharomycotina</taxon>
        <taxon>Saccharomycetes</taxon>
        <taxon>Saccharomycetales</taxon>
        <taxon>Saccharomycetaceae</taxon>
        <taxon>Saccharomyces</taxon>
    </lineage>
</organism>
<evidence type="ECO:0000255" key="1"/>
<evidence type="ECO:0000256" key="2">
    <source>
        <dbReference type="SAM" id="MobiDB-lite"/>
    </source>
</evidence>
<evidence type="ECO:0000269" key="3">
    <source>
    </source>
</evidence>
<evidence type="ECO:0000269" key="4">
    <source>
    </source>
</evidence>
<evidence type="ECO:0000269" key="5">
    <source>
    </source>
</evidence>
<evidence type="ECO:0000305" key="6"/>
<evidence type="ECO:0007744" key="7">
    <source>
    </source>
</evidence>
<evidence type="ECO:0007744" key="8">
    <source>
    </source>
</evidence>
<feature type="chain" id="PRO_0000087446" description="Glycolytic genes transcriptional activator GCR2">
    <location>
        <begin position="1"/>
        <end position="534"/>
    </location>
</feature>
<feature type="region of interest" description="Disordered" evidence="2">
    <location>
        <begin position="29"/>
        <end position="122"/>
    </location>
</feature>
<feature type="region of interest" description="Disordered" evidence="2">
    <location>
        <begin position="230"/>
        <end position="333"/>
    </location>
</feature>
<feature type="region of interest" description="Leucine-zipper">
    <location>
        <begin position="497"/>
        <end position="534"/>
    </location>
</feature>
<feature type="short sequence motif" description="Nuclear localization signal" evidence="1">
    <location>
        <begin position="281"/>
        <end position="288"/>
    </location>
</feature>
<feature type="compositionally biased region" description="Low complexity" evidence="2">
    <location>
        <begin position="30"/>
        <end position="43"/>
    </location>
</feature>
<feature type="compositionally biased region" description="Polar residues" evidence="2">
    <location>
        <begin position="64"/>
        <end position="88"/>
    </location>
</feature>
<feature type="compositionally biased region" description="Low complexity" evidence="2">
    <location>
        <begin position="89"/>
        <end position="122"/>
    </location>
</feature>
<feature type="compositionally biased region" description="Polar residues" evidence="2">
    <location>
        <begin position="238"/>
        <end position="252"/>
    </location>
</feature>
<feature type="compositionally biased region" description="Low complexity" evidence="2">
    <location>
        <begin position="253"/>
        <end position="279"/>
    </location>
</feature>
<feature type="compositionally biased region" description="Low complexity" evidence="2">
    <location>
        <begin position="295"/>
        <end position="304"/>
    </location>
</feature>
<feature type="compositionally biased region" description="Polar residues" evidence="2">
    <location>
        <begin position="312"/>
        <end position="328"/>
    </location>
</feature>
<feature type="modified residue" description="Phosphoserine" evidence="7">
    <location>
        <position position="151"/>
    </location>
</feature>
<feature type="modified residue" description="Phosphoserine" evidence="8">
    <location>
        <position position="406"/>
    </location>
</feature>
<feature type="modified residue" description="Phosphoserine" evidence="8">
    <location>
        <position position="409"/>
    </location>
</feature>
<protein>
    <recommendedName>
        <fullName>Glycolytic genes transcriptional activator GCR2</fullName>
    </recommendedName>
</protein>
<comment type="function">
    <text evidence="3 4 5">Transcriptional activator required for the expression of glycolytic genes. Enhances the CT box-dependent transcriptional activation of a RAP1-GCR1 complex. Required for GCR1 phosphorylation.</text>
</comment>
<comment type="subunit">
    <text>Homodimer via the leucine-zipper domain. Forms a complex with a GCR1 homodimer.</text>
</comment>
<comment type="subcellular location">
    <subcellularLocation>
        <location evidence="6">Nucleus</location>
    </subcellularLocation>
</comment>
<accession>Q01722</accession>
<accession>D6W0Y9</accession>